<proteinExistence type="inferred from homology"/>
<dbReference type="EC" id="4.1.3.1" evidence="1"/>
<dbReference type="EC" id="4.1.3.30" evidence="1"/>
<dbReference type="EMBL" id="AJ404885">
    <property type="protein sequence ID" value="CAC08487.1"/>
    <property type="molecule type" value="Genomic_DNA"/>
</dbReference>
<dbReference type="SMR" id="Q9HFN2"/>
<dbReference type="UniPathway" id="UPA00703">
    <property type="reaction ID" value="UER00719"/>
</dbReference>
<dbReference type="GO" id="GO:0009514">
    <property type="term" value="C:glyoxysome"/>
    <property type="evidence" value="ECO:0007669"/>
    <property type="project" value="UniProtKB-SubCell"/>
</dbReference>
<dbReference type="GO" id="GO:0004451">
    <property type="term" value="F:isocitrate lyase activity"/>
    <property type="evidence" value="ECO:0007669"/>
    <property type="project" value="UniProtKB-EC"/>
</dbReference>
<dbReference type="GO" id="GO:0046872">
    <property type="term" value="F:metal ion binding"/>
    <property type="evidence" value="ECO:0007669"/>
    <property type="project" value="UniProtKB-KW"/>
</dbReference>
<dbReference type="GO" id="GO:0046421">
    <property type="term" value="F:methylisocitrate lyase activity"/>
    <property type="evidence" value="ECO:0007669"/>
    <property type="project" value="UniProtKB-EC"/>
</dbReference>
<dbReference type="GO" id="GO:0006097">
    <property type="term" value="P:glyoxylate cycle"/>
    <property type="evidence" value="ECO:0007669"/>
    <property type="project" value="UniProtKB-UniPathway"/>
</dbReference>
<dbReference type="GO" id="GO:0006099">
    <property type="term" value="P:tricarboxylic acid cycle"/>
    <property type="evidence" value="ECO:0007669"/>
    <property type="project" value="UniProtKB-KW"/>
</dbReference>
<dbReference type="CDD" id="cd00377">
    <property type="entry name" value="ICL_PEPM"/>
    <property type="match status" value="1"/>
</dbReference>
<dbReference type="FunFam" id="1.10.10.850:FF:000001">
    <property type="entry name" value="Isocitrate lyase"/>
    <property type="match status" value="1"/>
</dbReference>
<dbReference type="Gene3D" id="1.10.10.850">
    <property type="match status" value="1"/>
</dbReference>
<dbReference type="Gene3D" id="3.20.20.60">
    <property type="entry name" value="Phosphoenolpyruvate-binding domains"/>
    <property type="match status" value="1"/>
</dbReference>
<dbReference type="InterPro" id="IPR039556">
    <property type="entry name" value="ICL/PEPM"/>
</dbReference>
<dbReference type="InterPro" id="IPR006254">
    <property type="entry name" value="Isocitrate_lyase"/>
</dbReference>
<dbReference type="InterPro" id="IPR018523">
    <property type="entry name" value="Isocitrate_lyase_ph_CS"/>
</dbReference>
<dbReference type="InterPro" id="IPR015813">
    <property type="entry name" value="Pyrv/PenolPyrv_kinase-like_dom"/>
</dbReference>
<dbReference type="InterPro" id="IPR040442">
    <property type="entry name" value="Pyrv_kinase-like_dom_sf"/>
</dbReference>
<dbReference type="NCBIfam" id="TIGR01346">
    <property type="entry name" value="isocit_lyase"/>
    <property type="match status" value="1"/>
</dbReference>
<dbReference type="PANTHER" id="PTHR21631:SF3">
    <property type="entry name" value="BIFUNCTIONAL GLYOXYLATE CYCLE PROTEIN"/>
    <property type="match status" value="1"/>
</dbReference>
<dbReference type="PANTHER" id="PTHR21631">
    <property type="entry name" value="ISOCITRATE LYASE/MALATE SYNTHASE"/>
    <property type="match status" value="1"/>
</dbReference>
<dbReference type="Pfam" id="PF00463">
    <property type="entry name" value="ICL"/>
    <property type="match status" value="1"/>
</dbReference>
<dbReference type="PIRSF" id="PIRSF001362">
    <property type="entry name" value="Isocit_lyase"/>
    <property type="match status" value="1"/>
</dbReference>
<dbReference type="SUPFAM" id="SSF51621">
    <property type="entry name" value="Phosphoenolpyruvate/pyruvate domain"/>
    <property type="match status" value="1"/>
</dbReference>
<dbReference type="PROSITE" id="PS00161">
    <property type="entry name" value="ISOCITRATE_LYASE"/>
    <property type="match status" value="1"/>
</dbReference>
<sequence length="550" mass="62394">MPYTPIDIKAEQEAFEREVAAVEQWWKEPRWRKTTRIYTAKDIVQKRGTLQIHYPSSDQAKKLYKLLEEHDRNKTASFTFGALDPIHVTQMAKYLDTVYISGWQSSSTASTSNEPSPDLADYPYDTVPNKCEHLWFAQLFHDRKQHEERFRMTPEERAKTPYTDFLRPIIADADTGHGGITAIIKLTKLFIERGAAGIHIEDQAPGTKKCGHMAGKVLVPIQEHINRLVAIRTAADIFGSDLLCVARTDSEAATLLTSTIDHRDHYFIIGSTNKDLQPLSEVMFQAEQRGLLKVMLAAVEEDWTKKAGLKLFHEAVIDEINSGYYPNKQALIAEFTTKVHPLSNTSNKEARALAKKLTGKDIFFDWEAPRVREGYYRYQGGTQCAVNRARAYAPYADIIWMESKLPDYAQAKEFADGVKAQWPEQWLSYNLSPSFNWNKAMSVLYQETYIQKLAKLGYVWQFITLAGLHTTALAVDNFARDYAKIGMRAYGQQIQAPEIENGVEVVKHQKWSGAEYIDNLLKLVTGGVTSTAAMGKGVTEDQFKDDKSKL</sequence>
<comment type="function">
    <text evidence="1">Catalyzes the formation of succinate and glyoxylate from isocitrate, a key step of the glyoxylate cycle, which operates as an anaplerotic route for replenishing the tricarboxylic acid cycle. Required for growth on ethanol or acetate, but dispensable when fermentable carbon sources are available. Also acts on 2-methylisocitrate.</text>
</comment>
<comment type="catalytic activity">
    <reaction evidence="1">
        <text>D-threo-isocitrate = glyoxylate + succinate</text>
        <dbReference type="Rhea" id="RHEA:13245"/>
        <dbReference type="ChEBI" id="CHEBI:15562"/>
        <dbReference type="ChEBI" id="CHEBI:30031"/>
        <dbReference type="ChEBI" id="CHEBI:36655"/>
        <dbReference type="EC" id="4.1.3.1"/>
    </reaction>
</comment>
<comment type="catalytic activity">
    <reaction evidence="1">
        <text>(2S,3R)-3-hydroxybutane-1,2,3-tricarboxylate = pyruvate + succinate</text>
        <dbReference type="Rhea" id="RHEA:16809"/>
        <dbReference type="ChEBI" id="CHEBI:15361"/>
        <dbReference type="ChEBI" id="CHEBI:30031"/>
        <dbReference type="ChEBI" id="CHEBI:57429"/>
        <dbReference type="EC" id="4.1.3.30"/>
    </reaction>
</comment>
<comment type="cofactor">
    <cofactor evidence="3">
        <name>Mg(2+)</name>
        <dbReference type="ChEBI" id="CHEBI:18420"/>
    </cofactor>
</comment>
<comment type="pathway">
    <text>Carbohydrate metabolism; glyoxylate cycle; (S)-malate from isocitrate: step 1/2.</text>
</comment>
<comment type="subunit">
    <text evidence="1">Homotetramer.</text>
</comment>
<comment type="subcellular location">
    <subcellularLocation>
        <location evidence="2">Glyoxysome</location>
    </subcellularLocation>
</comment>
<comment type="similarity">
    <text evidence="6">Belongs to the isocitrate lyase/PEP mutase superfamily. Isocitrate lyase family.</text>
</comment>
<name>ACEA_CYBJA</name>
<organism>
    <name type="scientific">Cyberlindnera jadinii</name>
    <name type="common">Torula yeast</name>
    <name type="synonym">Pichia jadinii</name>
    <dbReference type="NCBI Taxonomy" id="4903"/>
    <lineage>
        <taxon>Eukaryota</taxon>
        <taxon>Fungi</taxon>
        <taxon>Dikarya</taxon>
        <taxon>Ascomycota</taxon>
        <taxon>Saccharomycotina</taxon>
        <taxon>Saccharomycetes</taxon>
        <taxon>Phaffomycetales</taxon>
        <taxon>Phaffomycetaceae</taxon>
        <taxon>Cyberlindnera</taxon>
    </lineage>
</organism>
<keyword id="KW-0329">Glyoxylate bypass</keyword>
<keyword id="KW-0330">Glyoxysome</keyword>
<keyword id="KW-0456">Lyase</keyword>
<keyword id="KW-0460">Magnesium</keyword>
<keyword id="KW-0479">Metal-binding</keyword>
<keyword id="KW-0576">Peroxisome</keyword>
<keyword id="KW-0816">Tricarboxylic acid cycle</keyword>
<protein>
    <recommendedName>
        <fullName evidence="1">Isocitrate lyase</fullName>
        <shortName evidence="6">ICL</shortName>
        <shortName evidence="6">Isocitrase</shortName>
        <shortName evidence="6">Isocitratase</shortName>
        <ecNumber evidence="1">4.1.3.1</ecNumber>
    </recommendedName>
    <alternativeName>
        <fullName evidence="1">Methylisocitrate lyase</fullName>
        <shortName evidence="6">MICA</shortName>
        <ecNumber evidence="1">4.1.3.30</ecNumber>
    </alternativeName>
    <alternativeName>
        <fullName evidence="6">Threo-D(S)-isocitrate glyoxylate-lyase</fullName>
    </alternativeName>
</protein>
<feature type="chain" id="PRO_0000068796" description="Isocitrate lyase">
    <location>
        <begin position="1"/>
        <end position="550"/>
    </location>
</feature>
<feature type="short sequence motif" description="Microbody targeting signal" evidence="4">
    <location>
        <begin position="548"/>
        <end position="550"/>
    </location>
</feature>
<feature type="active site" description="Proton acceptor" evidence="3">
    <location>
        <position position="210"/>
    </location>
</feature>
<feature type="binding site" evidence="3">
    <location>
        <begin position="101"/>
        <end position="103"/>
    </location>
    <ligand>
        <name>substrate</name>
    </ligand>
</feature>
<feature type="binding site" evidence="3">
    <location>
        <position position="172"/>
    </location>
    <ligand>
        <name>Mg(2+)</name>
        <dbReference type="ChEBI" id="CHEBI:18420"/>
    </ligand>
</feature>
<feature type="binding site" evidence="3">
    <location>
        <begin position="211"/>
        <end position="212"/>
    </location>
    <ligand>
        <name>substrate</name>
    </ligand>
</feature>
<feature type="binding site" evidence="3">
    <location>
        <position position="247"/>
    </location>
    <ligand>
        <name>substrate</name>
    </ligand>
</feature>
<feature type="binding site" evidence="3">
    <location>
        <begin position="430"/>
        <end position="434"/>
    </location>
    <ligand>
        <name>substrate</name>
    </ligand>
</feature>
<feature type="binding site" evidence="3">
    <location>
        <position position="464"/>
    </location>
    <ligand>
        <name>substrate</name>
    </ligand>
</feature>
<gene>
    <name evidence="1" type="primary">ICL1</name>
    <name evidence="5" type="synonym">ICL</name>
</gene>
<evidence type="ECO:0000250" key="1">
    <source>
        <dbReference type="UniProtKB" id="P28240"/>
    </source>
</evidence>
<evidence type="ECO:0000250" key="2">
    <source>
        <dbReference type="UniProtKB" id="P28299"/>
    </source>
</evidence>
<evidence type="ECO:0000250" key="3">
    <source>
        <dbReference type="UniProtKB" id="P9WKK7"/>
    </source>
</evidence>
<evidence type="ECO:0000255" key="4"/>
<evidence type="ECO:0000303" key="5">
    <source ref="1"/>
</evidence>
<evidence type="ECO:0000305" key="6"/>
<reference key="1">
    <citation type="submission" date="2000-07" db="EMBL/GenBank/DDBJ databases">
        <title>The ICL gene from Camdida utilis.</title>
        <authorList>
            <person name="Menendez J.D.D.J."/>
            <person name="Rivero D."/>
            <person name="Valdes I."/>
        </authorList>
    </citation>
    <scope>NUCLEOTIDE SEQUENCE [GENOMIC DNA]</scope>
    <source>
        <strain>ATCC 9256 / CBS 841 / DSM 70167 / JCM 2311 / NBRC 0626 / NRRL Y-1084 / VKM Y-768</strain>
    </source>
</reference>
<accession>Q9HFN2</accession>